<gene>
    <name evidence="1" type="primary">psbD</name>
    <name type="ordered locus">AtCg00270</name>
</gene>
<proteinExistence type="evidence at protein level"/>
<protein>
    <recommendedName>
        <fullName evidence="1">Photosystem II D2 protein</fullName>
        <shortName evidence="1">PSII D2 protein</shortName>
        <ecNumber evidence="1">1.10.3.9</ecNumber>
    </recommendedName>
    <alternativeName>
        <fullName evidence="1">Photosystem Q(A) protein</fullName>
    </alternativeName>
</protein>
<name>PSBD_ARATH</name>
<organism>
    <name type="scientific">Arabidopsis thaliana</name>
    <name type="common">Mouse-ear cress</name>
    <dbReference type="NCBI Taxonomy" id="3702"/>
    <lineage>
        <taxon>Eukaryota</taxon>
        <taxon>Viridiplantae</taxon>
        <taxon>Streptophyta</taxon>
        <taxon>Embryophyta</taxon>
        <taxon>Tracheophyta</taxon>
        <taxon>Spermatophyta</taxon>
        <taxon>Magnoliopsida</taxon>
        <taxon>eudicotyledons</taxon>
        <taxon>Gunneridae</taxon>
        <taxon>Pentapetalae</taxon>
        <taxon>rosids</taxon>
        <taxon>malvids</taxon>
        <taxon>Brassicales</taxon>
        <taxon>Brassicaceae</taxon>
        <taxon>Camelineae</taxon>
        <taxon>Arabidopsis</taxon>
    </lineage>
</organism>
<dbReference type="EC" id="1.10.3.9" evidence="1"/>
<dbReference type="EMBL" id="AP000423">
    <property type="protein sequence ID" value="BAA84380.1"/>
    <property type="molecule type" value="Genomic_DNA"/>
</dbReference>
<dbReference type="RefSeq" id="NP_051054.1">
    <property type="nucleotide sequence ID" value="NC_000932.1"/>
</dbReference>
<dbReference type="PDB" id="5MDX">
    <property type="method" value="EM"/>
    <property type="resolution" value="5.30 A"/>
    <property type="chains" value="D/d=2-353"/>
</dbReference>
<dbReference type="PDB" id="7OUI">
    <property type="method" value="EM"/>
    <property type="resolution" value="2.79 A"/>
    <property type="chains" value="D/d=2-353"/>
</dbReference>
<dbReference type="PDBsum" id="5MDX"/>
<dbReference type="PDBsum" id="7OUI"/>
<dbReference type="EMDB" id="EMD-13078"/>
<dbReference type="EMDB" id="EMD-3491"/>
<dbReference type="SMR" id="P56761"/>
<dbReference type="BioGRID" id="29974">
    <property type="interactions" value="16"/>
</dbReference>
<dbReference type="FunCoup" id="P56761">
    <property type="interactions" value="320"/>
</dbReference>
<dbReference type="IntAct" id="P56761">
    <property type="interactions" value="2"/>
</dbReference>
<dbReference type="MINT" id="P56761"/>
<dbReference type="STRING" id="3702.P56761"/>
<dbReference type="TCDB" id="3.E.2.2.3">
    <property type="family name" value="the photosynthetic reaction center (prc) family"/>
</dbReference>
<dbReference type="iPTMnet" id="P56761"/>
<dbReference type="PaxDb" id="3702-ATCG00270.1"/>
<dbReference type="ProteomicsDB" id="224824"/>
<dbReference type="EnsemblPlants" id="ATCG00270.1">
    <property type="protein sequence ID" value="ATCG00270.1"/>
    <property type="gene ID" value="ATCG00270"/>
</dbReference>
<dbReference type="GeneID" id="844775"/>
<dbReference type="Gramene" id="ATCG00270.1">
    <property type="protein sequence ID" value="ATCG00270.1"/>
    <property type="gene ID" value="ATCG00270"/>
</dbReference>
<dbReference type="KEGG" id="ath:ArthCp017"/>
<dbReference type="Araport" id="ATCG00270"/>
<dbReference type="TAIR" id="ATCG00270">
    <property type="gene designation" value="PSBD"/>
</dbReference>
<dbReference type="eggNOG" id="ENOG502QWJF">
    <property type="taxonomic scope" value="Eukaryota"/>
</dbReference>
<dbReference type="HOGENOM" id="CLU_077965_0_0_1"/>
<dbReference type="InParanoid" id="P56761"/>
<dbReference type="OMA" id="RWFQLGG"/>
<dbReference type="BioCyc" id="MetaCyc:ATCG00270-MONOMER"/>
<dbReference type="PRO" id="PR:P56761"/>
<dbReference type="Proteomes" id="UP000006548">
    <property type="component" value="Chloroplast Pltd"/>
</dbReference>
<dbReference type="ExpressionAtlas" id="P56761">
    <property type="expression patterns" value="baseline and differential"/>
</dbReference>
<dbReference type="GO" id="GO:0009507">
    <property type="term" value="C:chloroplast"/>
    <property type="evidence" value="ECO:0007005"/>
    <property type="project" value="TAIR"/>
</dbReference>
<dbReference type="GO" id="GO:0009534">
    <property type="term" value="C:chloroplast thylakoid"/>
    <property type="evidence" value="ECO:0007005"/>
    <property type="project" value="TAIR"/>
</dbReference>
<dbReference type="GO" id="GO:0009535">
    <property type="term" value="C:chloroplast thylakoid membrane"/>
    <property type="evidence" value="ECO:0007005"/>
    <property type="project" value="TAIR"/>
</dbReference>
<dbReference type="GO" id="GO:0009523">
    <property type="term" value="C:photosystem II"/>
    <property type="evidence" value="ECO:0007669"/>
    <property type="project" value="UniProtKB-KW"/>
</dbReference>
<dbReference type="GO" id="GO:0009536">
    <property type="term" value="C:plastid"/>
    <property type="evidence" value="ECO:0007005"/>
    <property type="project" value="TAIR"/>
</dbReference>
<dbReference type="GO" id="GO:0009579">
    <property type="term" value="C:thylakoid"/>
    <property type="evidence" value="ECO:0007005"/>
    <property type="project" value="TAIR"/>
</dbReference>
<dbReference type="GO" id="GO:0016168">
    <property type="term" value="F:chlorophyll binding"/>
    <property type="evidence" value="ECO:0007669"/>
    <property type="project" value="UniProtKB-UniRule"/>
</dbReference>
<dbReference type="GO" id="GO:0045156">
    <property type="term" value="F:electron transporter, transferring electrons within the cyclic electron transport pathway of photosynthesis activity"/>
    <property type="evidence" value="ECO:0007669"/>
    <property type="project" value="InterPro"/>
</dbReference>
<dbReference type="GO" id="GO:0005506">
    <property type="term" value="F:iron ion binding"/>
    <property type="evidence" value="ECO:0007669"/>
    <property type="project" value="UniProtKB-UniRule"/>
</dbReference>
<dbReference type="GO" id="GO:0003729">
    <property type="term" value="F:mRNA binding"/>
    <property type="evidence" value="ECO:0000314"/>
    <property type="project" value="TAIR"/>
</dbReference>
<dbReference type="GO" id="GO:0010242">
    <property type="term" value="F:oxygen evolving activity"/>
    <property type="evidence" value="ECO:0007669"/>
    <property type="project" value="UniProtKB-EC"/>
</dbReference>
<dbReference type="GO" id="GO:0009772">
    <property type="term" value="P:photosynthetic electron transport in photosystem II"/>
    <property type="evidence" value="ECO:0007669"/>
    <property type="project" value="InterPro"/>
</dbReference>
<dbReference type="CDD" id="cd09288">
    <property type="entry name" value="Photosystem-II_D2"/>
    <property type="match status" value="1"/>
</dbReference>
<dbReference type="FunFam" id="1.20.85.10:FF:000001">
    <property type="entry name" value="photosystem II D2 protein-like"/>
    <property type="match status" value="1"/>
</dbReference>
<dbReference type="Gene3D" id="1.20.85.10">
    <property type="entry name" value="Photosystem II protein D1-like"/>
    <property type="match status" value="1"/>
</dbReference>
<dbReference type="HAMAP" id="MF_01383">
    <property type="entry name" value="PSII_PsbD_D2"/>
    <property type="match status" value="1"/>
</dbReference>
<dbReference type="InterPro" id="IPR055266">
    <property type="entry name" value="D1/D2"/>
</dbReference>
<dbReference type="InterPro" id="IPR036854">
    <property type="entry name" value="Photo_II_D1/D2_sf"/>
</dbReference>
<dbReference type="InterPro" id="IPR000484">
    <property type="entry name" value="Photo_RC_L/M"/>
</dbReference>
<dbReference type="InterPro" id="IPR055265">
    <property type="entry name" value="Photo_RC_L/M_CS"/>
</dbReference>
<dbReference type="InterPro" id="IPR005868">
    <property type="entry name" value="PSII_PsbD/D2"/>
</dbReference>
<dbReference type="NCBIfam" id="TIGR01152">
    <property type="entry name" value="psbD"/>
    <property type="match status" value="1"/>
</dbReference>
<dbReference type="PANTHER" id="PTHR33149:SF57">
    <property type="entry name" value="PHOTOSYSTEM II D2 PROTEIN"/>
    <property type="match status" value="1"/>
</dbReference>
<dbReference type="PANTHER" id="PTHR33149">
    <property type="entry name" value="PHOTOSYSTEM II PROTEIN D1"/>
    <property type="match status" value="1"/>
</dbReference>
<dbReference type="Pfam" id="PF00124">
    <property type="entry name" value="Photo_RC"/>
    <property type="match status" value="1"/>
</dbReference>
<dbReference type="PRINTS" id="PR00256">
    <property type="entry name" value="REACTNCENTRE"/>
</dbReference>
<dbReference type="SUPFAM" id="SSF81483">
    <property type="entry name" value="Bacterial photosystem II reaction centre, L and M subunits"/>
    <property type="match status" value="1"/>
</dbReference>
<dbReference type="PROSITE" id="PS00244">
    <property type="entry name" value="REACTION_CENTER"/>
    <property type="match status" value="1"/>
</dbReference>
<feature type="initiator methionine" description="Removed" evidence="2">
    <location>
        <position position="1"/>
    </location>
</feature>
<feature type="chain" id="PRO_0000090498" description="Photosystem II D2 protein">
    <location>
        <begin position="2"/>
        <end position="353"/>
    </location>
</feature>
<feature type="transmembrane region" description="Helical" evidence="1">
    <location>
        <begin position="41"/>
        <end position="61"/>
    </location>
</feature>
<feature type="transmembrane region" description="Helical" evidence="1">
    <location>
        <begin position="125"/>
        <end position="141"/>
    </location>
</feature>
<feature type="transmembrane region" description="Helical" evidence="1">
    <location>
        <begin position="153"/>
        <end position="166"/>
    </location>
</feature>
<feature type="transmembrane region" description="Helical" evidence="1">
    <location>
        <begin position="208"/>
        <end position="228"/>
    </location>
</feature>
<feature type="transmembrane region" description="Helical" evidence="1">
    <location>
        <begin position="279"/>
        <end position="295"/>
    </location>
</feature>
<feature type="binding site" description="axial binding residue" evidence="1">
    <location>
        <position position="118"/>
    </location>
    <ligand>
        <name>chlorophyll a</name>
        <dbReference type="ChEBI" id="CHEBI:58416"/>
        <label>ChlzD2</label>
    </ligand>
    <ligandPart>
        <name>Mg</name>
        <dbReference type="ChEBI" id="CHEBI:25107"/>
    </ligandPart>
</feature>
<feature type="binding site" evidence="1">
    <location>
        <position position="130"/>
    </location>
    <ligand>
        <name>pheophytin a</name>
        <dbReference type="ChEBI" id="CHEBI:136840"/>
        <label>D2</label>
    </ligand>
</feature>
<feature type="binding site" evidence="1">
    <location>
        <position position="143"/>
    </location>
    <ligand>
        <name>pheophytin a</name>
        <dbReference type="ChEBI" id="CHEBI:136840"/>
        <label>D2</label>
    </ligand>
</feature>
<feature type="binding site" description="axial binding residue" evidence="1">
    <location>
        <position position="198"/>
    </location>
    <ligand>
        <name>chlorophyll a</name>
        <dbReference type="ChEBI" id="CHEBI:58416"/>
        <label>PD2</label>
    </ligand>
    <ligandPart>
        <name>Mg</name>
        <dbReference type="ChEBI" id="CHEBI:25107"/>
    </ligandPart>
</feature>
<feature type="binding site" evidence="1">
    <location>
        <position position="215"/>
    </location>
    <ligand>
        <name>a plastoquinone</name>
        <dbReference type="ChEBI" id="CHEBI:17757"/>
        <label>Q(A)</label>
    </ligand>
</feature>
<feature type="binding site" evidence="1">
    <location>
        <position position="215"/>
    </location>
    <ligand>
        <name>Fe cation</name>
        <dbReference type="ChEBI" id="CHEBI:24875"/>
        <note>ligand shared with heterodimeric partner</note>
    </ligand>
</feature>
<feature type="binding site" evidence="1">
    <location>
        <position position="262"/>
    </location>
    <ligand>
        <name>a plastoquinone</name>
        <dbReference type="ChEBI" id="CHEBI:17757"/>
        <label>Q(A)</label>
    </ligand>
</feature>
<feature type="binding site" evidence="1">
    <location>
        <position position="269"/>
    </location>
    <ligand>
        <name>Fe cation</name>
        <dbReference type="ChEBI" id="CHEBI:24875"/>
        <note>ligand shared with heterodimeric partner</note>
    </ligand>
</feature>
<feature type="modified residue" description="N-acetylthreonine" evidence="2">
    <location>
        <position position="2"/>
    </location>
</feature>
<feature type="modified residue" description="Phosphothreonine" evidence="2">
    <location>
        <position position="2"/>
    </location>
</feature>
<feature type="helix" evidence="4">
    <location>
        <begin position="15"/>
        <end position="23"/>
    </location>
</feature>
<feature type="strand" evidence="4">
    <location>
        <begin position="27"/>
        <end position="29"/>
    </location>
</feature>
<feature type="turn" evidence="4">
    <location>
        <begin position="32"/>
        <end position="34"/>
    </location>
</feature>
<feature type="helix" evidence="4">
    <location>
        <begin position="35"/>
        <end position="54"/>
    </location>
</feature>
<feature type="turn" evidence="4">
    <location>
        <begin position="59"/>
        <end position="61"/>
    </location>
</feature>
<feature type="strand" evidence="4">
    <location>
        <begin position="62"/>
        <end position="64"/>
    </location>
</feature>
<feature type="helix" evidence="4">
    <location>
        <begin position="68"/>
        <end position="70"/>
    </location>
</feature>
<feature type="turn" evidence="4">
    <location>
        <begin position="74"/>
        <end position="76"/>
    </location>
</feature>
<feature type="helix" evidence="4">
    <location>
        <begin position="84"/>
        <end position="86"/>
    </location>
</feature>
<feature type="turn" evidence="4">
    <location>
        <begin position="96"/>
        <end position="100"/>
    </location>
</feature>
<feature type="helix" evidence="4">
    <location>
        <begin position="102"/>
        <end position="107"/>
    </location>
</feature>
<feature type="helix" evidence="4">
    <location>
        <begin position="110"/>
        <end position="136"/>
    </location>
</feature>
<feature type="helix" evidence="4">
    <location>
        <begin position="142"/>
        <end position="158"/>
    </location>
</feature>
<feature type="helix" evidence="4">
    <location>
        <begin position="160"/>
        <end position="164"/>
    </location>
</feature>
<feature type="strand" evidence="4">
    <location>
        <begin position="165"/>
        <end position="167"/>
    </location>
</feature>
<feature type="helix" evidence="4">
    <location>
        <begin position="168"/>
        <end position="170"/>
    </location>
</feature>
<feature type="helix" evidence="4">
    <location>
        <begin position="176"/>
        <end position="190"/>
    </location>
</feature>
<feature type="turn" evidence="4">
    <location>
        <begin position="192"/>
        <end position="194"/>
    </location>
</feature>
<feature type="helix" evidence="4">
    <location>
        <begin position="196"/>
        <end position="221"/>
    </location>
</feature>
<feature type="strand" evidence="4">
    <location>
        <begin position="222"/>
        <end position="224"/>
    </location>
</feature>
<feature type="strand" evidence="4">
    <location>
        <begin position="228"/>
        <end position="230"/>
    </location>
</feature>
<feature type="helix" evidence="4">
    <location>
        <begin position="232"/>
        <end position="234"/>
    </location>
</feature>
<feature type="helix" evidence="4">
    <location>
        <begin position="247"/>
        <end position="257"/>
    </location>
</feature>
<feature type="helix" evidence="4">
    <location>
        <begin position="265"/>
        <end position="291"/>
    </location>
</feature>
<feature type="helix" evidence="4">
    <location>
        <begin position="300"/>
        <end position="308"/>
    </location>
</feature>
<feature type="helix" evidence="4">
    <location>
        <begin position="315"/>
        <end position="334"/>
    </location>
</feature>
<feature type="helix" evidence="4">
    <location>
        <begin position="336"/>
        <end position="338"/>
    </location>
</feature>
<feature type="turn" evidence="4">
    <location>
        <begin position="344"/>
        <end position="346"/>
    </location>
</feature>
<evidence type="ECO:0000255" key="1">
    <source>
        <dbReference type="HAMAP-Rule" id="MF_01383"/>
    </source>
</evidence>
<evidence type="ECO:0000269" key="2">
    <source>
    </source>
</evidence>
<evidence type="ECO:0000269" key="3">
    <source>
    </source>
</evidence>
<evidence type="ECO:0007829" key="4">
    <source>
        <dbReference type="PDB" id="7OUI"/>
    </source>
</evidence>
<sequence length="353" mass="39548">MTIALGKFTKDEKDLFDIMDDWLRRDRFVFVGWSGLLLFPCAYFALGGWFTGTTFVTSWYTHGLASSYLEGCNFLTAAVSTPANSLAHSLLLLWGPEAQGDFTRWCQLGGLWAFVALHGAFALIGFMLRQFELARSVQLRPYNAIAFSGPIAVFVSVFLIYPLGQSGWFFAPSFGVAAIFRFILFFQGFHNWTLNPFHMMGVAGVLGAALLCAIHGATVENTLFEDGDGANTFRAFNPTQAEETYSMVTANRFWSQIFGVAFSNKRWLHFFMLFVPVTGLWMSALGVVGLALNLRAYDFVSQEIRAAEDPEFETFYTKNILLNEGIRAWMAAQDQPHENLIFPEEVLPRGNAL</sequence>
<comment type="function">
    <text evidence="1">Photosystem II (PSII) is a light-driven water:plastoquinone oxidoreductase that uses light energy to abstract electrons from H(2)O, generating O(2) and a proton gradient subsequently used for ATP formation. It consists of a core antenna complex that captures photons, and an electron transfer chain that converts photonic excitation into a charge separation. The D1/D2 (PsbA/PsbD) reaction center heterodimer binds P680, the primary electron donor of PSII as well as several subsequent electron acceptors. D2 is needed for assembly of a stable PSII complex.</text>
</comment>
<comment type="catalytic activity">
    <reaction evidence="1">
        <text>2 a plastoquinone + 4 hnu + 2 H2O = 2 a plastoquinol + O2</text>
        <dbReference type="Rhea" id="RHEA:36359"/>
        <dbReference type="Rhea" id="RHEA-COMP:9561"/>
        <dbReference type="Rhea" id="RHEA-COMP:9562"/>
        <dbReference type="ChEBI" id="CHEBI:15377"/>
        <dbReference type="ChEBI" id="CHEBI:15379"/>
        <dbReference type="ChEBI" id="CHEBI:17757"/>
        <dbReference type="ChEBI" id="CHEBI:30212"/>
        <dbReference type="ChEBI" id="CHEBI:62192"/>
        <dbReference type="EC" id="1.10.3.9"/>
    </reaction>
</comment>
<comment type="cofactor">
    <text evidence="1">The D1/D2 heterodimer binds P680, chlorophylls that are the primary electron donor of PSII, and subsequent electron acceptors. It shares a non-heme iron and each subunit binds pheophytin, quinone, additional chlorophylls, carotenoids and lipids. There is also a Cl(-1) ion associated with D1 and D2, which is required for oxygen evolution. The PSII complex binds additional chlorophylls, carotenoids and specific lipids.</text>
</comment>
<comment type="subunit">
    <text evidence="1 3">PSII is composed of 1 copy each of membrane proteins PsbA, PsbB, PsbC, PsbD, PsbE, PsbF, PsbH, PsbI, PsbJ, PsbK, PsbL, PsbM, PsbT, PsbX, PsbY, PsbZ, Psb30/Ycf12, at least 3 peripheral proteins of the oxygen-evolving complex and a large number of cofactors. It forms dimeric complexes. Interacts with PAM68.</text>
</comment>
<comment type="subcellular location">
    <subcellularLocation>
        <location evidence="1">Plastid</location>
        <location evidence="1">Chloroplast thylakoid membrane</location>
        <topology evidence="1">Multi-pass membrane protein</topology>
    </subcellularLocation>
</comment>
<comment type="PTM">
    <text evidence="2">Phosphorylation occurs in normal plant growth light conditions. Rapid dephosphorylation occurs during heat shock.</text>
</comment>
<comment type="miscellaneous">
    <text evidence="1">2 of the reaction center chlorophylls (ChlD1 and ChlD2) are entirely coordinated by water.</text>
</comment>
<comment type="similarity">
    <text evidence="1">Belongs to the reaction center PufL/M/PsbA/D family.</text>
</comment>
<keyword id="KW-0002">3D-structure</keyword>
<keyword id="KW-0007">Acetylation</keyword>
<keyword id="KW-0148">Chlorophyll</keyword>
<keyword id="KW-0150">Chloroplast</keyword>
<keyword id="KW-0157">Chromophore</keyword>
<keyword id="KW-0903">Direct protein sequencing</keyword>
<keyword id="KW-0249">Electron transport</keyword>
<keyword id="KW-0408">Iron</keyword>
<keyword id="KW-0460">Magnesium</keyword>
<keyword id="KW-0472">Membrane</keyword>
<keyword id="KW-0479">Metal-binding</keyword>
<keyword id="KW-0560">Oxidoreductase</keyword>
<keyword id="KW-0597">Phosphoprotein</keyword>
<keyword id="KW-0602">Photosynthesis</keyword>
<keyword id="KW-0604">Photosystem II</keyword>
<keyword id="KW-0934">Plastid</keyword>
<keyword id="KW-1185">Reference proteome</keyword>
<keyword id="KW-0793">Thylakoid</keyword>
<keyword id="KW-0812">Transmembrane</keyword>
<keyword id="KW-1133">Transmembrane helix</keyword>
<keyword id="KW-0813">Transport</keyword>
<geneLocation type="chloroplast"/>
<reference key="1">
    <citation type="journal article" date="1999" name="DNA Res.">
        <title>Complete structure of the chloroplast genome of Arabidopsis thaliana.</title>
        <authorList>
            <person name="Sato S."/>
            <person name="Nakamura Y."/>
            <person name="Kaneko T."/>
            <person name="Asamizu E."/>
            <person name="Tabata S."/>
        </authorList>
    </citation>
    <scope>NUCLEOTIDE SEQUENCE [LARGE SCALE GENOMIC DNA]</scope>
    <source>
        <strain>cv. Columbia</strain>
    </source>
</reference>
<reference key="2">
    <citation type="journal article" date="2001" name="J. Biol. Chem.">
        <title>Mass spectrometric resolution of reversible protein phosphorylation in photosynthetic membranes of Arabidopsis thaliana.</title>
        <authorList>
            <person name="Vener A.V."/>
            <person name="Harms A."/>
            <person name="Sussman M.R."/>
            <person name="Vierstra R.D."/>
        </authorList>
    </citation>
    <scope>PROTEIN SEQUENCE OF 2-7</scope>
    <scope>PHOSPHORYLATION AT THR-2</scope>
    <scope>ACETYLATION AT THR-2</scope>
    <source>
        <strain>cv. Columbia</strain>
    </source>
</reference>
<reference key="3">
    <citation type="journal article" date="2010" name="Plant Cell">
        <title>The Arabidopsis thylakoid protein PAM68 is required for efficient D1 biogenesis and photosystem II assembly.</title>
        <authorList>
            <person name="Armbruster U."/>
            <person name="Zuhlke J."/>
            <person name="Rengstl B."/>
            <person name="Kreller R."/>
            <person name="Makarenko E."/>
            <person name="Ruhle T."/>
            <person name="Schunemann D."/>
            <person name="Jahns P."/>
            <person name="Weisshaar B."/>
            <person name="Nickelsen J."/>
            <person name="Leister D."/>
        </authorList>
    </citation>
    <scope>INTERACTION WITH PAM68</scope>
</reference>
<accession>P56761</accession>